<name>ISCS_EDWI9</name>
<accession>C5BEU5</accession>
<feature type="chain" id="PRO_1000205170" description="Cysteine desulfurase IscS">
    <location>
        <begin position="1"/>
        <end position="404"/>
    </location>
</feature>
<feature type="active site" description="Cysteine persulfide intermediate" evidence="1">
    <location>
        <position position="328"/>
    </location>
</feature>
<feature type="binding site" evidence="1">
    <location>
        <begin position="75"/>
        <end position="76"/>
    </location>
    <ligand>
        <name>pyridoxal 5'-phosphate</name>
        <dbReference type="ChEBI" id="CHEBI:597326"/>
    </ligand>
</feature>
<feature type="binding site" evidence="1">
    <location>
        <position position="155"/>
    </location>
    <ligand>
        <name>pyridoxal 5'-phosphate</name>
        <dbReference type="ChEBI" id="CHEBI:597326"/>
    </ligand>
</feature>
<feature type="binding site" evidence="1">
    <location>
        <position position="183"/>
    </location>
    <ligand>
        <name>pyridoxal 5'-phosphate</name>
        <dbReference type="ChEBI" id="CHEBI:597326"/>
    </ligand>
</feature>
<feature type="binding site" evidence="1">
    <location>
        <begin position="203"/>
        <end position="205"/>
    </location>
    <ligand>
        <name>pyridoxal 5'-phosphate</name>
        <dbReference type="ChEBI" id="CHEBI:597326"/>
    </ligand>
</feature>
<feature type="binding site" evidence="1">
    <location>
        <position position="243"/>
    </location>
    <ligand>
        <name>pyridoxal 5'-phosphate</name>
        <dbReference type="ChEBI" id="CHEBI:597326"/>
    </ligand>
</feature>
<feature type="binding site" description="via persulfide group" evidence="1">
    <location>
        <position position="328"/>
    </location>
    <ligand>
        <name>[2Fe-2S] cluster</name>
        <dbReference type="ChEBI" id="CHEBI:190135"/>
        <note>ligand shared with IscU</note>
    </ligand>
</feature>
<feature type="modified residue" description="N6-(pyridoxal phosphate)lysine" evidence="1">
    <location>
        <position position="206"/>
    </location>
</feature>
<comment type="function">
    <text evidence="1">Master enzyme that delivers sulfur to a number of partners involved in Fe-S cluster assembly, tRNA modification or cofactor biosynthesis. Catalyzes the removal of elemental sulfur atoms from cysteine to produce alanine. Functions as a sulfur delivery protein for Fe-S cluster synthesis onto IscU, an Fe-S scaffold assembly protein, as well as other S acceptor proteins.</text>
</comment>
<comment type="catalytic activity">
    <reaction evidence="1">
        <text>(sulfur carrier)-H + L-cysteine = (sulfur carrier)-SH + L-alanine</text>
        <dbReference type="Rhea" id="RHEA:43892"/>
        <dbReference type="Rhea" id="RHEA-COMP:14737"/>
        <dbReference type="Rhea" id="RHEA-COMP:14739"/>
        <dbReference type="ChEBI" id="CHEBI:29917"/>
        <dbReference type="ChEBI" id="CHEBI:35235"/>
        <dbReference type="ChEBI" id="CHEBI:57972"/>
        <dbReference type="ChEBI" id="CHEBI:64428"/>
        <dbReference type="EC" id="2.8.1.7"/>
    </reaction>
</comment>
<comment type="cofactor">
    <cofactor evidence="1">
        <name>pyridoxal 5'-phosphate</name>
        <dbReference type="ChEBI" id="CHEBI:597326"/>
    </cofactor>
</comment>
<comment type="pathway">
    <text evidence="1">Cofactor biosynthesis; iron-sulfur cluster biosynthesis.</text>
</comment>
<comment type="subunit">
    <text evidence="1">Homodimer. Forms a heterotetramer with IscU, interacts with other sulfur acceptors.</text>
</comment>
<comment type="subcellular location">
    <subcellularLocation>
        <location evidence="1">Cytoplasm</location>
    </subcellularLocation>
</comment>
<comment type="similarity">
    <text evidence="1">Belongs to the class-V pyridoxal-phosphate-dependent aminotransferase family. NifS/IscS subfamily.</text>
</comment>
<reference key="1">
    <citation type="submission" date="2009-03" db="EMBL/GenBank/DDBJ databases">
        <title>Complete genome sequence of Edwardsiella ictaluri 93-146.</title>
        <authorList>
            <person name="Williams M.L."/>
            <person name="Gillaspy A.F."/>
            <person name="Dyer D.W."/>
            <person name="Thune R.L."/>
            <person name="Waldbieser G.C."/>
            <person name="Schuster S.C."/>
            <person name="Gipson J."/>
            <person name="Zaitshik J."/>
            <person name="Landry C."/>
            <person name="Lawrence M.L."/>
        </authorList>
    </citation>
    <scope>NUCLEOTIDE SEQUENCE [LARGE SCALE GENOMIC DNA]</scope>
    <source>
        <strain>93-146</strain>
    </source>
</reference>
<protein>
    <recommendedName>
        <fullName evidence="1">Cysteine desulfurase IscS</fullName>
        <ecNumber evidence="1">2.8.1.7</ecNumber>
    </recommendedName>
</protein>
<keyword id="KW-0001">2Fe-2S</keyword>
<keyword id="KW-0963">Cytoplasm</keyword>
<keyword id="KW-0408">Iron</keyword>
<keyword id="KW-0411">Iron-sulfur</keyword>
<keyword id="KW-0479">Metal-binding</keyword>
<keyword id="KW-0663">Pyridoxal phosphate</keyword>
<keyword id="KW-0808">Transferase</keyword>
<evidence type="ECO:0000255" key="1">
    <source>
        <dbReference type="HAMAP-Rule" id="MF_00331"/>
    </source>
</evidence>
<proteinExistence type="inferred from homology"/>
<dbReference type="EC" id="2.8.1.7" evidence="1"/>
<dbReference type="EMBL" id="CP001600">
    <property type="protein sequence ID" value="ACR70333.1"/>
    <property type="molecule type" value="Genomic_DNA"/>
</dbReference>
<dbReference type="RefSeq" id="WP_015872420.1">
    <property type="nucleotide sequence ID" value="NZ_CP169062.1"/>
</dbReference>
<dbReference type="SMR" id="C5BEU5"/>
<dbReference type="STRING" id="67780.B6E78_07575"/>
<dbReference type="KEGG" id="eic:NT01EI_3183"/>
<dbReference type="PATRIC" id="fig|634503.3.peg.2844"/>
<dbReference type="HOGENOM" id="CLU_003433_0_2_6"/>
<dbReference type="OrthoDB" id="9808002at2"/>
<dbReference type="UniPathway" id="UPA00266"/>
<dbReference type="Proteomes" id="UP000001485">
    <property type="component" value="Chromosome"/>
</dbReference>
<dbReference type="GO" id="GO:1990221">
    <property type="term" value="C:L-cysteine desulfurase complex"/>
    <property type="evidence" value="ECO:0007669"/>
    <property type="project" value="UniProtKB-ARBA"/>
</dbReference>
<dbReference type="GO" id="GO:0051537">
    <property type="term" value="F:2 iron, 2 sulfur cluster binding"/>
    <property type="evidence" value="ECO:0007669"/>
    <property type="project" value="UniProtKB-UniRule"/>
</dbReference>
<dbReference type="GO" id="GO:0031071">
    <property type="term" value="F:cysteine desulfurase activity"/>
    <property type="evidence" value="ECO:0007669"/>
    <property type="project" value="UniProtKB-UniRule"/>
</dbReference>
<dbReference type="GO" id="GO:0046872">
    <property type="term" value="F:metal ion binding"/>
    <property type="evidence" value="ECO:0007669"/>
    <property type="project" value="UniProtKB-KW"/>
</dbReference>
<dbReference type="GO" id="GO:0030170">
    <property type="term" value="F:pyridoxal phosphate binding"/>
    <property type="evidence" value="ECO:0007669"/>
    <property type="project" value="UniProtKB-UniRule"/>
</dbReference>
<dbReference type="GO" id="GO:0044571">
    <property type="term" value="P:[2Fe-2S] cluster assembly"/>
    <property type="evidence" value="ECO:0007669"/>
    <property type="project" value="UniProtKB-UniRule"/>
</dbReference>
<dbReference type="FunFam" id="3.40.640.10:FF:000003">
    <property type="entry name" value="Cysteine desulfurase IscS"/>
    <property type="match status" value="1"/>
</dbReference>
<dbReference type="FunFam" id="3.90.1150.10:FF:000002">
    <property type="entry name" value="Cysteine desulfurase IscS"/>
    <property type="match status" value="1"/>
</dbReference>
<dbReference type="Gene3D" id="3.90.1150.10">
    <property type="entry name" value="Aspartate Aminotransferase, domain 1"/>
    <property type="match status" value="1"/>
</dbReference>
<dbReference type="Gene3D" id="3.40.640.10">
    <property type="entry name" value="Type I PLP-dependent aspartate aminotransferase-like (Major domain)"/>
    <property type="match status" value="1"/>
</dbReference>
<dbReference type="HAMAP" id="MF_00331">
    <property type="entry name" value="Cys_desulf_IscS"/>
    <property type="match status" value="1"/>
</dbReference>
<dbReference type="InterPro" id="IPR000192">
    <property type="entry name" value="Aminotrans_V_dom"/>
</dbReference>
<dbReference type="InterPro" id="IPR020578">
    <property type="entry name" value="Aminotrans_V_PyrdxlP_BS"/>
</dbReference>
<dbReference type="InterPro" id="IPR010240">
    <property type="entry name" value="Cys_deSase_IscS"/>
</dbReference>
<dbReference type="InterPro" id="IPR016454">
    <property type="entry name" value="Cysteine_dSase"/>
</dbReference>
<dbReference type="InterPro" id="IPR015424">
    <property type="entry name" value="PyrdxlP-dep_Trfase"/>
</dbReference>
<dbReference type="InterPro" id="IPR015421">
    <property type="entry name" value="PyrdxlP-dep_Trfase_major"/>
</dbReference>
<dbReference type="InterPro" id="IPR015422">
    <property type="entry name" value="PyrdxlP-dep_Trfase_small"/>
</dbReference>
<dbReference type="NCBIfam" id="TIGR02006">
    <property type="entry name" value="IscS"/>
    <property type="match status" value="1"/>
</dbReference>
<dbReference type="NCBIfam" id="NF010611">
    <property type="entry name" value="PRK14012.1"/>
    <property type="match status" value="1"/>
</dbReference>
<dbReference type="PANTHER" id="PTHR11601:SF34">
    <property type="entry name" value="CYSTEINE DESULFURASE"/>
    <property type="match status" value="1"/>
</dbReference>
<dbReference type="PANTHER" id="PTHR11601">
    <property type="entry name" value="CYSTEINE DESULFURYLASE FAMILY MEMBER"/>
    <property type="match status" value="1"/>
</dbReference>
<dbReference type="Pfam" id="PF00266">
    <property type="entry name" value="Aminotran_5"/>
    <property type="match status" value="1"/>
</dbReference>
<dbReference type="PIRSF" id="PIRSF005572">
    <property type="entry name" value="NifS"/>
    <property type="match status" value="1"/>
</dbReference>
<dbReference type="SUPFAM" id="SSF53383">
    <property type="entry name" value="PLP-dependent transferases"/>
    <property type="match status" value="1"/>
</dbReference>
<dbReference type="PROSITE" id="PS00595">
    <property type="entry name" value="AA_TRANSFER_CLASS_5"/>
    <property type="match status" value="1"/>
</dbReference>
<gene>
    <name evidence="1" type="primary">iscS</name>
    <name type="ordered locus">NT01EI_3183</name>
</gene>
<organism>
    <name type="scientific">Edwardsiella ictaluri (strain 93-146)</name>
    <dbReference type="NCBI Taxonomy" id="634503"/>
    <lineage>
        <taxon>Bacteria</taxon>
        <taxon>Pseudomonadati</taxon>
        <taxon>Pseudomonadota</taxon>
        <taxon>Gammaproteobacteria</taxon>
        <taxon>Enterobacterales</taxon>
        <taxon>Hafniaceae</taxon>
        <taxon>Edwardsiella</taxon>
    </lineage>
</organism>
<sequence>MKLPIYMDYSATTPADPRVAEKMMQYLTLDGTFGNPASRSHRFGWQAEEAVDVARNNIAELVGSDPREIVFTSGATEADNLAIKGAANFYQKKGKHIITCKTEHKAVLDTCRQLEREGFEVTYMTPQPNGLIDLNALEAVMRDDTILVSIMHVNNEIGIIQDIETIGEMCHARGIIFHVDATQSVGKLPIDLSKLKVDLMSFSGHKIYGPKGIGALYVRRKPRVRIEAQMHGGGHERGMRSGTLPVHQIVGMGEAYRIAKEEMSTEVLRLRVLRDRLWNGLKDIEEVYLNGALEQGAPNILNVSFNFVEGESLIMALKDLAVSSGSACTSASLEPSYVLRALGLNDELAHSSIRFSLGRFTTEEEVDYAIDLVRKSIGRLRELSPLWEMHKQGVDISTIEWSAH</sequence>